<sequence length="235" mass="26288">MTHQKRLSVPKSWKVGRKGNKWISTTRPGPHSQARSLPLGLIIRDVLKLVDNNREGKRILSEGKVLVDGISRKDLRFPVGLFDVITLPLVNEAYRMLQDEKGRLVLYKLNETNVNKLCRINNKTTVKGGKIQLNLNDGTNILGSNDYGTKDSLILSIPDKHVVKHLKFEVGNLAMVIGGQHSGETGKIMEIREVKSSRHNTVMISGETDFETIEDYVIVIGEDKPEIRLGGEISE</sequence>
<keyword id="KW-0687">Ribonucleoprotein</keyword>
<keyword id="KW-0689">Ribosomal protein</keyword>
<keyword id="KW-0694">RNA-binding</keyword>
<keyword id="KW-0699">rRNA-binding</keyword>
<proteinExistence type="inferred from homology"/>
<protein>
    <recommendedName>
        <fullName evidence="1">Small ribosomal subunit protein eS4</fullName>
    </recommendedName>
    <alternativeName>
        <fullName evidence="2">30S ribosomal protein S4e</fullName>
    </alternativeName>
</protein>
<reference key="1">
    <citation type="journal article" date="2002" name="J. Mol. Microbiol. Biotechnol.">
        <title>The genome of Methanosarcina mazei: evidence for lateral gene transfer between Bacteria and Archaea.</title>
        <authorList>
            <person name="Deppenmeier U."/>
            <person name="Johann A."/>
            <person name="Hartsch T."/>
            <person name="Merkl R."/>
            <person name="Schmitz R.A."/>
            <person name="Martinez-Arias R."/>
            <person name="Henne A."/>
            <person name="Wiezer A."/>
            <person name="Baeumer S."/>
            <person name="Jacobi C."/>
            <person name="Brueggemann H."/>
            <person name="Lienard T."/>
            <person name="Christmann A."/>
            <person name="Boemecke M."/>
            <person name="Steckel S."/>
            <person name="Bhattacharyya A."/>
            <person name="Lykidis A."/>
            <person name="Overbeek R."/>
            <person name="Klenk H.-P."/>
            <person name="Gunsalus R.P."/>
            <person name="Fritz H.-J."/>
            <person name="Gottschalk G."/>
        </authorList>
    </citation>
    <scope>NUCLEOTIDE SEQUENCE [LARGE SCALE GENOMIC DNA]</scope>
    <source>
        <strain>ATCC BAA-159 / DSM 3647 / Goe1 / Go1 / JCM 11833 / OCM 88</strain>
    </source>
</reference>
<name>RS4E_METMA</name>
<gene>
    <name evidence="1" type="primary">rps4e</name>
    <name type="ordered locus">MM_2136</name>
</gene>
<evidence type="ECO:0000255" key="1">
    <source>
        <dbReference type="HAMAP-Rule" id="MF_00485"/>
    </source>
</evidence>
<evidence type="ECO:0000305" key="2"/>
<comment type="similarity">
    <text evidence="1">Belongs to the eukaryotic ribosomal protein eS4 family.</text>
</comment>
<organism>
    <name type="scientific">Methanosarcina mazei (strain ATCC BAA-159 / DSM 3647 / Goe1 / Go1 / JCM 11833 / OCM 88)</name>
    <name type="common">Methanosarcina frisia</name>
    <dbReference type="NCBI Taxonomy" id="192952"/>
    <lineage>
        <taxon>Archaea</taxon>
        <taxon>Methanobacteriati</taxon>
        <taxon>Methanobacteriota</taxon>
        <taxon>Stenosarchaea group</taxon>
        <taxon>Methanomicrobia</taxon>
        <taxon>Methanosarcinales</taxon>
        <taxon>Methanosarcinaceae</taxon>
        <taxon>Methanosarcina</taxon>
    </lineage>
</organism>
<accession>Q8PV38</accession>
<dbReference type="EMBL" id="AE008384">
    <property type="protein sequence ID" value="AAM31832.1"/>
    <property type="molecule type" value="Genomic_DNA"/>
</dbReference>
<dbReference type="RefSeq" id="WP_011034067.1">
    <property type="nucleotide sequence ID" value="NC_003901.1"/>
</dbReference>
<dbReference type="SMR" id="Q8PV38"/>
<dbReference type="KEGG" id="mma:MM_2136"/>
<dbReference type="PATRIC" id="fig|192952.21.peg.2450"/>
<dbReference type="eggNOG" id="arCOG04093">
    <property type="taxonomic scope" value="Archaea"/>
</dbReference>
<dbReference type="HOGENOM" id="CLU_060400_0_0_2"/>
<dbReference type="Proteomes" id="UP000000595">
    <property type="component" value="Chromosome"/>
</dbReference>
<dbReference type="GO" id="GO:0022627">
    <property type="term" value="C:cytosolic small ribosomal subunit"/>
    <property type="evidence" value="ECO:0007669"/>
    <property type="project" value="TreeGrafter"/>
</dbReference>
<dbReference type="GO" id="GO:0019843">
    <property type="term" value="F:rRNA binding"/>
    <property type="evidence" value="ECO:0007669"/>
    <property type="project" value="UniProtKB-KW"/>
</dbReference>
<dbReference type="GO" id="GO:0003735">
    <property type="term" value="F:structural constituent of ribosome"/>
    <property type="evidence" value="ECO:0007669"/>
    <property type="project" value="InterPro"/>
</dbReference>
<dbReference type="GO" id="GO:0006412">
    <property type="term" value="P:translation"/>
    <property type="evidence" value="ECO:0007669"/>
    <property type="project" value="UniProtKB-UniRule"/>
</dbReference>
<dbReference type="CDD" id="cd06087">
    <property type="entry name" value="KOW_RPS4"/>
    <property type="match status" value="1"/>
</dbReference>
<dbReference type="FunFam" id="3.10.290.10:FF:000044">
    <property type="entry name" value="30S ribosomal protein S4e"/>
    <property type="match status" value="1"/>
</dbReference>
<dbReference type="Gene3D" id="2.30.30.30">
    <property type="match status" value="1"/>
</dbReference>
<dbReference type="Gene3D" id="2.40.50.740">
    <property type="match status" value="1"/>
</dbReference>
<dbReference type="Gene3D" id="3.10.290.10">
    <property type="entry name" value="RNA-binding S4 domain"/>
    <property type="match status" value="1"/>
</dbReference>
<dbReference type="HAMAP" id="MF_00485">
    <property type="entry name" value="Ribosomal_eS4"/>
    <property type="match status" value="1"/>
</dbReference>
<dbReference type="InterPro" id="IPR005824">
    <property type="entry name" value="KOW"/>
</dbReference>
<dbReference type="InterPro" id="IPR014722">
    <property type="entry name" value="Rib_uL2_dom2"/>
</dbReference>
<dbReference type="InterPro" id="IPR000876">
    <property type="entry name" value="Ribosomal_eS4"/>
</dbReference>
<dbReference type="InterPro" id="IPR013845">
    <property type="entry name" value="Ribosomal_eS4_central_region"/>
</dbReference>
<dbReference type="InterPro" id="IPR038237">
    <property type="entry name" value="Ribosomal_eS4_central_sf"/>
</dbReference>
<dbReference type="InterPro" id="IPR041982">
    <property type="entry name" value="Ribosomal_eS4_KOW"/>
</dbReference>
<dbReference type="InterPro" id="IPR013843">
    <property type="entry name" value="Ribosomal_eS4_N"/>
</dbReference>
<dbReference type="InterPro" id="IPR018199">
    <property type="entry name" value="Ribosomal_eS4_N_CS"/>
</dbReference>
<dbReference type="InterPro" id="IPR036986">
    <property type="entry name" value="S4_RNA-bd_sf"/>
</dbReference>
<dbReference type="NCBIfam" id="NF003312">
    <property type="entry name" value="PRK04313.1"/>
    <property type="match status" value="1"/>
</dbReference>
<dbReference type="PANTHER" id="PTHR11581">
    <property type="entry name" value="30S/40S RIBOSOMAL PROTEIN S4"/>
    <property type="match status" value="1"/>
</dbReference>
<dbReference type="PANTHER" id="PTHR11581:SF0">
    <property type="entry name" value="SMALL RIBOSOMAL SUBUNIT PROTEIN ES4"/>
    <property type="match status" value="1"/>
</dbReference>
<dbReference type="Pfam" id="PF00900">
    <property type="entry name" value="Ribosomal_S4e"/>
    <property type="match status" value="1"/>
</dbReference>
<dbReference type="Pfam" id="PF08071">
    <property type="entry name" value="RS4NT"/>
    <property type="match status" value="1"/>
</dbReference>
<dbReference type="PIRSF" id="PIRSF002116">
    <property type="entry name" value="Ribosomal_S4"/>
    <property type="match status" value="1"/>
</dbReference>
<dbReference type="SMART" id="SM00739">
    <property type="entry name" value="KOW"/>
    <property type="match status" value="1"/>
</dbReference>
<dbReference type="SUPFAM" id="SSF55174">
    <property type="entry name" value="Alpha-L RNA-binding motif"/>
    <property type="match status" value="1"/>
</dbReference>
<dbReference type="PROSITE" id="PS00528">
    <property type="entry name" value="RIBOSOMAL_S4E"/>
    <property type="match status" value="1"/>
</dbReference>
<dbReference type="PROSITE" id="PS50889">
    <property type="entry name" value="S4"/>
    <property type="match status" value="1"/>
</dbReference>
<feature type="chain" id="PRO_0000130851" description="Small ribosomal subunit protein eS4">
    <location>
        <begin position="1"/>
        <end position="235"/>
    </location>
</feature>
<feature type="domain" description="S4 RNA-binding" evidence="1">
    <location>
        <begin position="37"/>
        <end position="110"/>
    </location>
</feature>